<accession>Q9XP68</accession>
<feature type="chain" id="PRO_0000061452" description="Cytochrome b">
    <location>
        <begin position="1"/>
        <end position="379"/>
    </location>
</feature>
<feature type="transmembrane region" description="Helical" evidence="2">
    <location>
        <begin position="33"/>
        <end position="53"/>
    </location>
</feature>
<feature type="transmembrane region" description="Helical" evidence="2">
    <location>
        <begin position="77"/>
        <end position="98"/>
    </location>
</feature>
<feature type="transmembrane region" description="Helical" evidence="2">
    <location>
        <begin position="113"/>
        <end position="133"/>
    </location>
</feature>
<feature type="transmembrane region" description="Helical" evidence="2">
    <location>
        <begin position="178"/>
        <end position="198"/>
    </location>
</feature>
<feature type="transmembrane region" description="Helical" evidence="2">
    <location>
        <begin position="226"/>
        <end position="246"/>
    </location>
</feature>
<feature type="transmembrane region" description="Helical" evidence="2">
    <location>
        <begin position="288"/>
        <end position="308"/>
    </location>
</feature>
<feature type="transmembrane region" description="Helical" evidence="2">
    <location>
        <begin position="320"/>
        <end position="340"/>
    </location>
</feature>
<feature type="transmembrane region" description="Helical" evidence="2">
    <location>
        <begin position="347"/>
        <end position="367"/>
    </location>
</feature>
<feature type="binding site" description="axial binding residue" evidence="2">
    <location>
        <position position="83"/>
    </location>
    <ligand>
        <name>heme b</name>
        <dbReference type="ChEBI" id="CHEBI:60344"/>
        <label>b562</label>
    </ligand>
    <ligandPart>
        <name>Fe</name>
        <dbReference type="ChEBI" id="CHEBI:18248"/>
    </ligandPart>
</feature>
<feature type="binding site" description="axial binding residue" evidence="2">
    <location>
        <position position="97"/>
    </location>
    <ligand>
        <name>heme b</name>
        <dbReference type="ChEBI" id="CHEBI:60344"/>
        <label>b566</label>
    </ligand>
    <ligandPart>
        <name>Fe</name>
        <dbReference type="ChEBI" id="CHEBI:18248"/>
    </ligandPart>
</feature>
<feature type="binding site" description="axial binding residue" evidence="2">
    <location>
        <position position="182"/>
    </location>
    <ligand>
        <name>heme b</name>
        <dbReference type="ChEBI" id="CHEBI:60344"/>
        <label>b562</label>
    </ligand>
    <ligandPart>
        <name>Fe</name>
        <dbReference type="ChEBI" id="CHEBI:18248"/>
    </ligandPart>
</feature>
<feature type="binding site" description="axial binding residue" evidence="2">
    <location>
        <position position="196"/>
    </location>
    <ligand>
        <name>heme b</name>
        <dbReference type="ChEBI" id="CHEBI:60344"/>
        <label>b566</label>
    </ligand>
    <ligandPart>
        <name>Fe</name>
        <dbReference type="ChEBI" id="CHEBI:18248"/>
    </ligandPart>
</feature>
<feature type="binding site" evidence="2">
    <location>
        <position position="201"/>
    </location>
    <ligand>
        <name>a ubiquinone</name>
        <dbReference type="ChEBI" id="CHEBI:16389"/>
    </ligand>
</feature>
<gene>
    <name type="primary">MT-CYB</name>
    <name type="synonym">COB</name>
    <name type="synonym">CYTB</name>
    <name type="synonym">MTCYB</name>
</gene>
<comment type="function">
    <text evidence="2">Component of the ubiquinol-cytochrome c reductase complex (complex III or cytochrome b-c1 complex) that is part of the mitochondrial respiratory chain. The b-c1 complex mediates electron transfer from ubiquinol to cytochrome c. Contributes to the generation of a proton gradient across the mitochondrial membrane that is then used for ATP synthesis.</text>
</comment>
<comment type="cofactor">
    <cofactor evidence="2">
        <name>heme b</name>
        <dbReference type="ChEBI" id="CHEBI:60344"/>
    </cofactor>
    <text evidence="2">Binds 2 heme b groups non-covalently.</text>
</comment>
<comment type="subunit">
    <text evidence="2">The cytochrome bc1 complex contains 11 subunits: 3 respiratory subunits (MT-CYB, CYC1 and UQCRFS1), 2 core proteins (UQCRC1 and UQCRC2) and 6 low-molecular weight proteins (UQCRH/QCR6, UQCRB/QCR7, UQCRQ/QCR8, UQCR10/QCR9, UQCR11/QCR10 and a cleavage product of UQCRFS1). This cytochrome bc1 complex then forms a dimer.</text>
</comment>
<comment type="subcellular location">
    <subcellularLocation>
        <location evidence="2">Mitochondrion inner membrane</location>
        <topology evidence="2">Multi-pass membrane protein</topology>
    </subcellularLocation>
</comment>
<comment type="miscellaneous">
    <text evidence="1">Heme 1 (or BL or b562) is low-potential and absorbs at about 562 nm, and heme 2 (or BH or b566) is high-potential and absorbs at about 566 nm.</text>
</comment>
<comment type="similarity">
    <text evidence="3 4">Belongs to the cytochrome b family.</text>
</comment>
<comment type="caution">
    <text evidence="2">The full-length protein contains only eight transmembrane helices, not nine as predicted by bioinformatics tools.</text>
</comment>
<protein>
    <recommendedName>
        <fullName>Cytochrome b</fullName>
    </recommendedName>
    <alternativeName>
        <fullName>Complex III subunit 3</fullName>
    </alternativeName>
    <alternativeName>
        <fullName>Complex III subunit III</fullName>
    </alternativeName>
    <alternativeName>
        <fullName>Cytochrome b-c1 complex subunit 3</fullName>
    </alternativeName>
    <alternativeName>
        <fullName>Ubiquinol-cytochrome-c reductase complex cytochrome b subunit</fullName>
    </alternativeName>
</protein>
<reference key="1">
    <citation type="journal article" date="1999" name="Proc. R. Soc. B">
        <title>Evolutionary affinities of the enigmatic saola (Pseudoryx nghetinhensis) in the context of the molecular phylogeny of Bovidae.</title>
        <authorList>
            <person name="Hassanin A."/>
            <person name="Douzery E.J.P."/>
        </authorList>
    </citation>
    <scope>NUCLEOTIDE SEQUENCE [GENOMIC DNA]</scope>
</reference>
<proteinExistence type="inferred from homology"/>
<keyword id="KW-0249">Electron transport</keyword>
<keyword id="KW-0349">Heme</keyword>
<keyword id="KW-0408">Iron</keyword>
<keyword id="KW-0472">Membrane</keyword>
<keyword id="KW-0479">Metal-binding</keyword>
<keyword id="KW-0496">Mitochondrion</keyword>
<keyword id="KW-0999">Mitochondrion inner membrane</keyword>
<keyword id="KW-0679">Respiratory chain</keyword>
<keyword id="KW-0812">Transmembrane</keyword>
<keyword id="KW-1133">Transmembrane helix</keyword>
<keyword id="KW-0813">Transport</keyword>
<keyword id="KW-0830">Ubiquinone</keyword>
<organism>
    <name type="scientific">Pseudoryx nghetinhensis</name>
    <name type="common">Saola</name>
    <dbReference type="NCBI Taxonomy" id="97363"/>
    <lineage>
        <taxon>Eukaryota</taxon>
        <taxon>Metazoa</taxon>
        <taxon>Chordata</taxon>
        <taxon>Craniata</taxon>
        <taxon>Vertebrata</taxon>
        <taxon>Euteleostomi</taxon>
        <taxon>Mammalia</taxon>
        <taxon>Eutheria</taxon>
        <taxon>Laurasiatheria</taxon>
        <taxon>Artiodactyla</taxon>
        <taxon>Ruminantia</taxon>
        <taxon>Pecora</taxon>
        <taxon>Bovidae</taxon>
        <taxon>Bovinae</taxon>
        <taxon>Pseudoryx</taxon>
    </lineage>
</organism>
<sequence length="379" mass="42899">MTNIXXSHPLVKIMNNAFIDLPAPSNISSWWNFGSLLGICLILQILTGLFLAMHYTSDTMTAFSSITHICRDVNYGWMIRYIHANGASMFFICLYMHVGRGLYYGSYTFMETWNIGVILLFTVMATAFMGYVLPWGQMSFWGATVITNLLSAIPYIGTNLVEWIWGGFSVDKATLTRFFAFHFILPFIIMALAMIHLLFLHETGSNNPTGISSDADKIPFHPYYTIKDILGALLLTLALMLLVLFTPDLLGDPDNYTPANPLNTPPHIKPEWYFLFAYAILRSIPNKLGGVLALVLSILILTLMPLLHMSKQRSMMFRPFSQCLFWILTADLLTLTWIGGQPVEHPYIIIGQLASITYFLLILVLMPMTSMIENNLLKW</sequence>
<name>CYB_PSENG</name>
<dbReference type="EMBL" id="AF091635">
    <property type="protein sequence ID" value="AAD42708.1"/>
    <property type="molecule type" value="Genomic_DNA"/>
</dbReference>
<dbReference type="GO" id="GO:0005743">
    <property type="term" value="C:mitochondrial inner membrane"/>
    <property type="evidence" value="ECO:0007669"/>
    <property type="project" value="UniProtKB-SubCell"/>
</dbReference>
<dbReference type="GO" id="GO:0045275">
    <property type="term" value="C:respiratory chain complex III"/>
    <property type="evidence" value="ECO:0007669"/>
    <property type="project" value="InterPro"/>
</dbReference>
<dbReference type="GO" id="GO:0046872">
    <property type="term" value="F:metal ion binding"/>
    <property type="evidence" value="ECO:0007669"/>
    <property type="project" value="UniProtKB-KW"/>
</dbReference>
<dbReference type="GO" id="GO:0008121">
    <property type="term" value="F:ubiquinol-cytochrome-c reductase activity"/>
    <property type="evidence" value="ECO:0007669"/>
    <property type="project" value="InterPro"/>
</dbReference>
<dbReference type="GO" id="GO:0006122">
    <property type="term" value="P:mitochondrial electron transport, ubiquinol to cytochrome c"/>
    <property type="evidence" value="ECO:0007669"/>
    <property type="project" value="TreeGrafter"/>
</dbReference>
<dbReference type="CDD" id="cd00290">
    <property type="entry name" value="cytochrome_b_C"/>
    <property type="match status" value="1"/>
</dbReference>
<dbReference type="CDD" id="cd00284">
    <property type="entry name" value="Cytochrome_b_N"/>
    <property type="match status" value="1"/>
</dbReference>
<dbReference type="FunFam" id="1.20.810.10:FF:000002">
    <property type="entry name" value="Cytochrome b"/>
    <property type="match status" value="1"/>
</dbReference>
<dbReference type="Gene3D" id="1.20.810.10">
    <property type="entry name" value="Cytochrome Bc1 Complex, Chain C"/>
    <property type="match status" value="1"/>
</dbReference>
<dbReference type="InterPro" id="IPR005798">
    <property type="entry name" value="Cyt_b/b6_C"/>
</dbReference>
<dbReference type="InterPro" id="IPR036150">
    <property type="entry name" value="Cyt_b/b6_C_sf"/>
</dbReference>
<dbReference type="InterPro" id="IPR005797">
    <property type="entry name" value="Cyt_b/b6_N"/>
</dbReference>
<dbReference type="InterPro" id="IPR027387">
    <property type="entry name" value="Cytb/b6-like_sf"/>
</dbReference>
<dbReference type="InterPro" id="IPR030689">
    <property type="entry name" value="Cytochrome_b"/>
</dbReference>
<dbReference type="InterPro" id="IPR048260">
    <property type="entry name" value="Cytochrome_b_C_euk/bac"/>
</dbReference>
<dbReference type="InterPro" id="IPR048259">
    <property type="entry name" value="Cytochrome_b_N_euk/bac"/>
</dbReference>
<dbReference type="InterPro" id="IPR016174">
    <property type="entry name" value="Di-haem_cyt_TM"/>
</dbReference>
<dbReference type="PANTHER" id="PTHR19271">
    <property type="entry name" value="CYTOCHROME B"/>
    <property type="match status" value="1"/>
</dbReference>
<dbReference type="PANTHER" id="PTHR19271:SF16">
    <property type="entry name" value="CYTOCHROME B"/>
    <property type="match status" value="1"/>
</dbReference>
<dbReference type="Pfam" id="PF00032">
    <property type="entry name" value="Cytochrom_B_C"/>
    <property type="match status" value="1"/>
</dbReference>
<dbReference type="Pfam" id="PF00033">
    <property type="entry name" value="Cytochrome_B"/>
    <property type="match status" value="1"/>
</dbReference>
<dbReference type="PIRSF" id="PIRSF038885">
    <property type="entry name" value="COB"/>
    <property type="match status" value="1"/>
</dbReference>
<dbReference type="SUPFAM" id="SSF81648">
    <property type="entry name" value="a domain/subunit of cytochrome bc1 complex (Ubiquinol-cytochrome c reductase)"/>
    <property type="match status" value="1"/>
</dbReference>
<dbReference type="SUPFAM" id="SSF81342">
    <property type="entry name" value="Transmembrane di-heme cytochromes"/>
    <property type="match status" value="1"/>
</dbReference>
<dbReference type="PROSITE" id="PS51003">
    <property type="entry name" value="CYTB_CTER"/>
    <property type="match status" value="1"/>
</dbReference>
<dbReference type="PROSITE" id="PS51002">
    <property type="entry name" value="CYTB_NTER"/>
    <property type="match status" value="1"/>
</dbReference>
<evidence type="ECO:0000250" key="1"/>
<evidence type="ECO:0000250" key="2">
    <source>
        <dbReference type="UniProtKB" id="P00157"/>
    </source>
</evidence>
<evidence type="ECO:0000255" key="3">
    <source>
        <dbReference type="PROSITE-ProRule" id="PRU00967"/>
    </source>
</evidence>
<evidence type="ECO:0000255" key="4">
    <source>
        <dbReference type="PROSITE-ProRule" id="PRU00968"/>
    </source>
</evidence>
<geneLocation type="mitochondrion"/>